<protein>
    <recommendedName>
        <fullName evidence="1">ATP-dependent protease subunit HslV</fullName>
        <ecNumber evidence="1">3.4.25.2</ecNumber>
    </recommendedName>
    <alternativeName>
        <fullName evidence="1">Heat shock protein HslV</fullName>
    </alternativeName>
</protein>
<feature type="chain" id="PRO_1000100914" description="ATP-dependent protease subunit HslV">
    <location>
        <begin position="1"/>
        <end position="176"/>
    </location>
</feature>
<feature type="active site" evidence="1">
    <location>
        <position position="2"/>
    </location>
</feature>
<feature type="binding site" evidence="1">
    <location>
        <position position="157"/>
    </location>
    <ligand>
        <name>Na(+)</name>
        <dbReference type="ChEBI" id="CHEBI:29101"/>
    </ligand>
</feature>
<feature type="binding site" evidence="1">
    <location>
        <position position="160"/>
    </location>
    <ligand>
        <name>Na(+)</name>
        <dbReference type="ChEBI" id="CHEBI:29101"/>
    </ligand>
</feature>
<feature type="binding site" evidence="1">
    <location>
        <position position="163"/>
    </location>
    <ligand>
        <name>Na(+)</name>
        <dbReference type="ChEBI" id="CHEBI:29101"/>
    </ligand>
</feature>
<reference key="1">
    <citation type="journal article" date="2009" name="BMC Genomics">
        <title>Pseudogene accumulation in the evolutionary histories of Salmonella enterica serovars Paratyphi A and Typhi.</title>
        <authorList>
            <person name="Holt K.E."/>
            <person name="Thomson N.R."/>
            <person name="Wain J."/>
            <person name="Langridge G.C."/>
            <person name="Hasan R."/>
            <person name="Bhutta Z.A."/>
            <person name="Quail M.A."/>
            <person name="Norbertczak H."/>
            <person name="Walker D."/>
            <person name="Simmonds M."/>
            <person name="White B."/>
            <person name="Bason N."/>
            <person name="Mungall K."/>
            <person name="Dougan G."/>
            <person name="Parkhill J."/>
        </authorList>
    </citation>
    <scope>NUCLEOTIDE SEQUENCE [LARGE SCALE GENOMIC DNA]</scope>
    <source>
        <strain>AKU_12601</strain>
    </source>
</reference>
<dbReference type="EC" id="3.4.25.2" evidence="1"/>
<dbReference type="EMBL" id="FM200053">
    <property type="protein sequence ID" value="CAR61944.1"/>
    <property type="molecule type" value="Genomic_DNA"/>
</dbReference>
<dbReference type="RefSeq" id="WP_000208240.1">
    <property type="nucleotide sequence ID" value="NC_011147.1"/>
</dbReference>
<dbReference type="SMR" id="B5BJK9"/>
<dbReference type="MEROPS" id="T01.006"/>
<dbReference type="KEGG" id="sek:SSPA3662"/>
<dbReference type="HOGENOM" id="CLU_093872_1_0_6"/>
<dbReference type="Proteomes" id="UP000001869">
    <property type="component" value="Chromosome"/>
</dbReference>
<dbReference type="GO" id="GO:0009376">
    <property type="term" value="C:HslUV protease complex"/>
    <property type="evidence" value="ECO:0007669"/>
    <property type="project" value="UniProtKB-UniRule"/>
</dbReference>
<dbReference type="GO" id="GO:0005839">
    <property type="term" value="C:proteasome core complex"/>
    <property type="evidence" value="ECO:0007669"/>
    <property type="project" value="InterPro"/>
</dbReference>
<dbReference type="GO" id="GO:0046872">
    <property type="term" value="F:metal ion binding"/>
    <property type="evidence" value="ECO:0007669"/>
    <property type="project" value="UniProtKB-KW"/>
</dbReference>
<dbReference type="GO" id="GO:0004298">
    <property type="term" value="F:threonine-type endopeptidase activity"/>
    <property type="evidence" value="ECO:0007669"/>
    <property type="project" value="UniProtKB-KW"/>
</dbReference>
<dbReference type="GO" id="GO:0051603">
    <property type="term" value="P:proteolysis involved in protein catabolic process"/>
    <property type="evidence" value="ECO:0007669"/>
    <property type="project" value="InterPro"/>
</dbReference>
<dbReference type="CDD" id="cd01913">
    <property type="entry name" value="protease_HslV"/>
    <property type="match status" value="1"/>
</dbReference>
<dbReference type="FunFam" id="3.60.20.10:FF:000002">
    <property type="entry name" value="ATP-dependent protease subunit HslV"/>
    <property type="match status" value="1"/>
</dbReference>
<dbReference type="Gene3D" id="3.60.20.10">
    <property type="entry name" value="Glutamine Phosphoribosylpyrophosphate, subunit 1, domain 1"/>
    <property type="match status" value="1"/>
</dbReference>
<dbReference type="HAMAP" id="MF_00248">
    <property type="entry name" value="HslV"/>
    <property type="match status" value="1"/>
</dbReference>
<dbReference type="InterPro" id="IPR022281">
    <property type="entry name" value="ATP-dep_Prtase_HsIV_su"/>
</dbReference>
<dbReference type="InterPro" id="IPR029055">
    <property type="entry name" value="Ntn_hydrolases_N"/>
</dbReference>
<dbReference type="InterPro" id="IPR001353">
    <property type="entry name" value="Proteasome_sua/b"/>
</dbReference>
<dbReference type="InterPro" id="IPR023333">
    <property type="entry name" value="Proteasome_suB-type"/>
</dbReference>
<dbReference type="NCBIfam" id="TIGR03692">
    <property type="entry name" value="ATP_dep_HslV"/>
    <property type="match status" value="1"/>
</dbReference>
<dbReference type="NCBIfam" id="NF003964">
    <property type="entry name" value="PRK05456.1"/>
    <property type="match status" value="1"/>
</dbReference>
<dbReference type="PANTHER" id="PTHR32194:SF0">
    <property type="entry name" value="ATP-DEPENDENT PROTEASE SUBUNIT HSLV"/>
    <property type="match status" value="1"/>
</dbReference>
<dbReference type="PANTHER" id="PTHR32194">
    <property type="entry name" value="METALLOPROTEASE TLDD"/>
    <property type="match status" value="1"/>
</dbReference>
<dbReference type="Pfam" id="PF00227">
    <property type="entry name" value="Proteasome"/>
    <property type="match status" value="1"/>
</dbReference>
<dbReference type="PIRSF" id="PIRSF039093">
    <property type="entry name" value="HslV"/>
    <property type="match status" value="1"/>
</dbReference>
<dbReference type="SUPFAM" id="SSF56235">
    <property type="entry name" value="N-terminal nucleophile aminohydrolases (Ntn hydrolases)"/>
    <property type="match status" value="1"/>
</dbReference>
<dbReference type="PROSITE" id="PS51476">
    <property type="entry name" value="PROTEASOME_BETA_2"/>
    <property type="match status" value="1"/>
</dbReference>
<keyword id="KW-0021">Allosteric enzyme</keyword>
<keyword id="KW-0963">Cytoplasm</keyword>
<keyword id="KW-0378">Hydrolase</keyword>
<keyword id="KW-0479">Metal-binding</keyword>
<keyword id="KW-0645">Protease</keyword>
<keyword id="KW-0915">Sodium</keyword>
<keyword id="KW-0346">Stress response</keyword>
<keyword id="KW-0888">Threonine protease</keyword>
<proteinExistence type="inferred from homology"/>
<organism>
    <name type="scientific">Salmonella paratyphi A (strain AKU_12601)</name>
    <dbReference type="NCBI Taxonomy" id="554290"/>
    <lineage>
        <taxon>Bacteria</taxon>
        <taxon>Pseudomonadati</taxon>
        <taxon>Pseudomonadota</taxon>
        <taxon>Gammaproteobacteria</taxon>
        <taxon>Enterobacterales</taxon>
        <taxon>Enterobacteriaceae</taxon>
        <taxon>Salmonella</taxon>
    </lineage>
</organism>
<sequence length="176" mass="18985">MTTIVSVRRNGHVVIAGDGQATLGNTVMKGNVKKVRRLYNDKVIAGFAGGTADAFTLFELFERKLEMHQGHLVKAAVELAKDWRTDRMLRKLEALLAVADETASLIITGNGDVVQPENDLIAIGSGGPYAQAAARALLENTELGAREIAEKALDIAGDICIYTNHFHTIEELTAKA</sequence>
<gene>
    <name evidence="1" type="primary">hslV</name>
    <name type="ordered locus">SSPA3662</name>
</gene>
<name>HSLV_SALPK</name>
<evidence type="ECO:0000255" key="1">
    <source>
        <dbReference type="HAMAP-Rule" id="MF_00248"/>
    </source>
</evidence>
<comment type="function">
    <text evidence="1">Protease subunit of a proteasome-like degradation complex believed to be a general protein degrading machinery.</text>
</comment>
<comment type="catalytic activity">
    <reaction evidence="1">
        <text>ATP-dependent cleavage of peptide bonds with broad specificity.</text>
        <dbReference type="EC" id="3.4.25.2"/>
    </reaction>
</comment>
<comment type="activity regulation">
    <text evidence="1">Allosterically activated by HslU binding.</text>
</comment>
<comment type="subunit">
    <text evidence="1">A double ring-shaped homohexamer of HslV is capped on each side by a ring-shaped HslU homohexamer. The assembly of the HslU/HslV complex is dependent on binding of ATP.</text>
</comment>
<comment type="subcellular location">
    <subcellularLocation>
        <location evidence="1">Cytoplasm</location>
    </subcellularLocation>
</comment>
<comment type="induction">
    <text evidence="1">By heat shock.</text>
</comment>
<comment type="similarity">
    <text evidence="1">Belongs to the peptidase T1B family. HslV subfamily.</text>
</comment>
<accession>B5BJK9</accession>